<accession>Q6BKI1</accession>
<gene>
    <name type="primary">MED11</name>
    <name type="ordered locus">DEHA2F21824g</name>
</gene>
<feature type="chain" id="PRO_0000304320" description="Mediator of RNA polymerase II transcription subunit 11">
    <location>
        <begin position="1"/>
        <end position="184"/>
    </location>
</feature>
<feature type="region of interest" description="Disordered" evidence="3">
    <location>
        <begin position="142"/>
        <end position="184"/>
    </location>
</feature>
<feature type="compositionally biased region" description="Polar residues" evidence="3">
    <location>
        <begin position="142"/>
        <end position="152"/>
    </location>
</feature>
<feature type="compositionally biased region" description="Basic and acidic residues" evidence="3">
    <location>
        <begin position="154"/>
        <end position="173"/>
    </location>
</feature>
<feature type="compositionally biased region" description="Acidic residues" evidence="3">
    <location>
        <begin position="174"/>
        <end position="184"/>
    </location>
</feature>
<name>MED11_DEBHA</name>
<sequence length="184" mass="20836">MSIEKESTNNFVQERLDSLYEIDCKIVSLLDNMSSLFQTYSTPKSSDNDLTEQKDQMKAQTKNIYNAISNVAIGLRKEVKIMDENIGVYNKNKDGIMILPISVDQKNTTLGTKKLNDEIKELNTIVTGEETDGAMNDTNMEATTKQETNINNEDSEKEKQENITAIETKKESSENEDEDFDMIA</sequence>
<evidence type="ECO:0000250" key="1"/>
<evidence type="ECO:0000250" key="2">
    <source>
        <dbReference type="UniProtKB" id="Q99278"/>
    </source>
</evidence>
<evidence type="ECO:0000256" key="3">
    <source>
        <dbReference type="SAM" id="MobiDB-lite"/>
    </source>
</evidence>
<evidence type="ECO:0000305" key="4"/>
<comment type="function">
    <text evidence="2">Component of the Mediator complex, a coactivator involved in the regulated transcription of nearly all RNA polymerase II-dependent genes. Mediator functions as a bridge to convey information from gene-specific regulatory proteins to the basal RNA polymerase II transcription machinery. Mediator is recruited to promoters by direct interactions with regulatory proteins and serves as a scaffold for the assembly of a functional pre-initiation complex with RNA polymerase II and the general transcription factors (By similarity).</text>
</comment>
<comment type="subunit">
    <text evidence="1">Component of the Mediator complex.</text>
</comment>
<comment type="subcellular location">
    <subcellularLocation>
        <location evidence="1">Nucleus</location>
    </subcellularLocation>
</comment>
<comment type="similarity">
    <text evidence="4">Belongs to the Mediator complex subunit 11 family.</text>
</comment>
<dbReference type="EMBL" id="CR382138">
    <property type="protein sequence ID" value="CAG89691.2"/>
    <property type="molecule type" value="Genomic_DNA"/>
</dbReference>
<dbReference type="RefSeq" id="XP_461290.2">
    <property type="nucleotide sequence ID" value="XM_461290.1"/>
</dbReference>
<dbReference type="SMR" id="Q6BKI1"/>
<dbReference type="FunCoup" id="Q6BKI1">
    <property type="interactions" value="130"/>
</dbReference>
<dbReference type="STRING" id="284592.Q6BKI1"/>
<dbReference type="GeneID" id="2903404"/>
<dbReference type="KEGG" id="dha:DEHA2F21824g"/>
<dbReference type="VEuPathDB" id="FungiDB:DEHA2F21824g"/>
<dbReference type="eggNOG" id="ENOG502S3YW">
    <property type="taxonomic scope" value="Eukaryota"/>
</dbReference>
<dbReference type="HOGENOM" id="CLU_121031_0_0_1"/>
<dbReference type="InParanoid" id="Q6BKI1"/>
<dbReference type="OMA" id="NMEATTK"/>
<dbReference type="OrthoDB" id="5418434at2759"/>
<dbReference type="Proteomes" id="UP000000599">
    <property type="component" value="Chromosome F"/>
</dbReference>
<dbReference type="GO" id="GO:0016592">
    <property type="term" value="C:mediator complex"/>
    <property type="evidence" value="ECO:0007669"/>
    <property type="project" value="InterPro"/>
</dbReference>
<dbReference type="GO" id="GO:0003712">
    <property type="term" value="F:transcription coregulator activity"/>
    <property type="evidence" value="ECO:0007669"/>
    <property type="project" value="InterPro"/>
</dbReference>
<dbReference type="GO" id="GO:0006357">
    <property type="term" value="P:regulation of transcription by RNA polymerase II"/>
    <property type="evidence" value="ECO:0007669"/>
    <property type="project" value="InterPro"/>
</dbReference>
<dbReference type="Gene3D" id="1.10.287.3490">
    <property type="match status" value="1"/>
</dbReference>
<dbReference type="InterPro" id="IPR019404">
    <property type="entry name" value="Mediator_Med11"/>
</dbReference>
<dbReference type="Pfam" id="PF10280">
    <property type="entry name" value="Med11"/>
    <property type="match status" value="1"/>
</dbReference>
<protein>
    <recommendedName>
        <fullName>Mediator of RNA polymerase II transcription subunit 11</fullName>
    </recommendedName>
    <alternativeName>
        <fullName>Mediator complex subunit 11</fullName>
    </alternativeName>
</protein>
<reference key="1">
    <citation type="journal article" date="2004" name="Nature">
        <title>Genome evolution in yeasts.</title>
        <authorList>
            <person name="Dujon B."/>
            <person name="Sherman D."/>
            <person name="Fischer G."/>
            <person name="Durrens P."/>
            <person name="Casaregola S."/>
            <person name="Lafontaine I."/>
            <person name="de Montigny J."/>
            <person name="Marck C."/>
            <person name="Neuveglise C."/>
            <person name="Talla E."/>
            <person name="Goffard N."/>
            <person name="Frangeul L."/>
            <person name="Aigle M."/>
            <person name="Anthouard V."/>
            <person name="Babour A."/>
            <person name="Barbe V."/>
            <person name="Barnay S."/>
            <person name="Blanchin S."/>
            <person name="Beckerich J.-M."/>
            <person name="Beyne E."/>
            <person name="Bleykasten C."/>
            <person name="Boisrame A."/>
            <person name="Boyer J."/>
            <person name="Cattolico L."/>
            <person name="Confanioleri F."/>
            <person name="de Daruvar A."/>
            <person name="Despons L."/>
            <person name="Fabre E."/>
            <person name="Fairhead C."/>
            <person name="Ferry-Dumazet H."/>
            <person name="Groppi A."/>
            <person name="Hantraye F."/>
            <person name="Hennequin C."/>
            <person name="Jauniaux N."/>
            <person name="Joyet P."/>
            <person name="Kachouri R."/>
            <person name="Kerrest A."/>
            <person name="Koszul R."/>
            <person name="Lemaire M."/>
            <person name="Lesur I."/>
            <person name="Ma L."/>
            <person name="Muller H."/>
            <person name="Nicaud J.-M."/>
            <person name="Nikolski M."/>
            <person name="Oztas S."/>
            <person name="Ozier-Kalogeropoulos O."/>
            <person name="Pellenz S."/>
            <person name="Potier S."/>
            <person name="Richard G.-F."/>
            <person name="Straub M.-L."/>
            <person name="Suleau A."/>
            <person name="Swennen D."/>
            <person name="Tekaia F."/>
            <person name="Wesolowski-Louvel M."/>
            <person name="Westhof E."/>
            <person name="Wirth B."/>
            <person name="Zeniou-Meyer M."/>
            <person name="Zivanovic Y."/>
            <person name="Bolotin-Fukuhara M."/>
            <person name="Thierry A."/>
            <person name="Bouchier C."/>
            <person name="Caudron B."/>
            <person name="Scarpelli C."/>
            <person name="Gaillardin C."/>
            <person name="Weissenbach J."/>
            <person name="Wincker P."/>
            <person name="Souciet J.-L."/>
        </authorList>
    </citation>
    <scope>NUCLEOTIDE SEQUENCE [LARGE SCALE GENOMIC DNA]</scope>
    <source>
        <strain>ATCC 36239 / CBS 767 / BCRC 21394 / JCM 1990 / NBRC 0083 / IGC 2968</strain>
    </source>
</reference>
<keyword id="KW-0010">Activator</keyword>
<keyword id="KW-0539">Nucleus</keyword>
<keyword id="KW-1185">Reference proteome</keyword>
<keyword id="KW-0804">Transcription</keyword>
<keyword id="KW-0805">Transcription regulation</keyword>
<proteinExistence type="inferred from homology"/>
<organism>
    <name type="scientific">Debaryomyces hansenii (strain ATCC 36239 / CBS 767 / BCRC 21394 / JCM 1990 / NBRC 0083 / IGC 2968)</name>
    <name type="common">Yeast</name>
    <name type="synonym">Torulaspora hansenii</name>
    <dbReference type="NCBI Taxonomy" id="284592"/>
    <lineage>
        <taxon>Eukaryota</taxon>
        <taxon>Fungi</taxon>
        <taxon>Dikarya</taxon>
        <taxon>Ascomycota</taxon>
        <taxon>Saccharomycotina</taxon>
        <taxon>Pichiomycetes</taxon>
        <taxon>Debaryomycetaceae</taxon>
        <taxon>Debaryomyces</taxon>
    </lineage>
</organism>